<comment type="function">
    <text evidence="2 7 8 9">Molecular calcium-binding chaperone promoting folding, oligomeric assembly and quality control in the endoplasmic reticulum (ER) via the calreticulin/calnexin cycle (By similarity). This lectin may interact transiently with almost all of the monoglucosylated glycoproteins that are synthesized in the ER (By similarity). Probably by controlling the folding of extracellular matrix protein unc-52/Perlecan, may play a role in the formation of fibrous organelles, a hemidesmosome-like structure attaching muscles to the epidermis (PubMed:20153198). Protects dopaminergic neurons against oxidative stress-induced neurodegeneration (PubMed:29346364). May play a role in protection against ER stress (PubMed:24933177). Plays a role in modulating lifespan, acting by influencing ER calcium homeostasis (PubMed:32905769).</text>
</comment>
<comment type="subcellular location">
    <subcellularLocation>
        <location>Endoplasmic reticulum lumen</location>
    </subcellularLocation>
</comment>
<comment type="induction">
    <text evidence="8 10">By ER stress in an xbp-1-dependent manner (PubMed:24933177). By aging (PubMed:32905769).</text>
</comment>
<comment type="domain">
    <text evidence="1">Can be divided into a N-terminal globular domain, a proline-rich P-domain forming an elongated arm-like structure and a C-terminal acidic domain. The P-domain binds one molecule of calcium with high affinity, whereas the acidic C-domain binds multiple calcium ions with low affinity (By similarity).</text>
</comment>
<comment type="domain">
    <text evidence="1">The interaction with glycans occurs through a binding site in the globular lectin domain.</text>
</comment>
<comment type="domain">
    <text evidence="1">The zinc binding sites are localized to the N-domain.</text>
</comment>
<comment type="PTM">
    <text evidence="6">Cleaved by caspase ced-3 in vitro.</text>
</comment>
<comment type="disruption phenotype">
    <text evidence="7">RNAi-mediated knockdown in a vab-10(e698) mutant background causes 45 percent embryonic lethality. In the surviving animals, causes a 14 percent larval lethality associated with the detachment of muscles from the epidermis.</text>
</comment>
<comment type="similarity">
    <text evidence="11">Belongs to the calreticulin family.</text>
</comment>
<proteinExistence type="evidence at protein level"/>
<organism>
    <name type="scientific">Caenorhabditis elegans</name>
    <dbReference type="NCBI Taxonomy" id="6239"/>
    <lineage>
        <taxon>Eukaryota</taxon>
        <taxon>Metazoa</taxon>
        <taxon>Ecdysozoa</taxon>
        <taxon>Nematoda</taxon>
        <taxon>Chromadorea</taxon>
        <taxon>Rhabditida</taxon>
        <taxon>Rhabditina</taxon>
        <taxon>Rhabditomorpha</taxon>
        <taxon>Rhabditoidea</taxon>
        <taxon>Rhabditidae</taxon>
        <taxon>Peloderinae</taxon>
        <taxon>Caenorhabditis</taxon>
    </lineage>
</organism>
<protein>
    <recommendedName>
        <fullName>Calreticulin</fullName>
    </recommendedName>
</protein>
<evidence type="ECO:0000250" key="1"/>
<evidence type="ECO:0000250" key="2">
    <source>
        <dbReference type="UniProtKB" id="P14211"/>
    </source>
</evidence>
<evidence type="ECO:0000255" key="3"/>
<evidence type="ECO:0000255" key="4">
    <source>
        <dbReference type="PROSITE-ProRule" id="PRU10138"/>
    </source>
</evidence>
<evidence type="ECO:0000256" key="5">
    <source>
        <dbReference type="SAM" id="MobiDB-lite"/>
    </source>
</evidence>
<evidence type="ECO:0000269" key="6">
    <source>
    </source>
</evidence>
<evidence type="ECO:0000269" key="7">
    <source>
    </source>
</evidence>
<evidence type="ECO:0000269" key="8">
    <source>
    </source>
</evidence>
<evidence type="ECO:0000269" key="9">
    <source>
    </source>
</evidence>
<evidence type="ECO:0000269" key="10">
    <source>
    </source>
</evidence>
<evidence type="ECO:0000305" key="11"/>
<dbReference type="EMBL" id="X59589">
    <property type="protein sequence ID" value="CAA42159.1"/>
    <property type="molecule type" value="Genomic_DNA"/>
</dbReference>
<dbReference type="EMBL" id="BX284605">
    <property type="protein sequence ID" value="CCD69629.1"/>
    <property type="molecule type" value="Genomic_DNA"/>
</dbReference>
<dbReference type="PIR" id="S25851">
    <property type="entry name" value="S25851"/>
</dbReference>
<dbReference type="RefSeq" id="NP_504575.1">
    <property type="nucleotide sequence ID" value="NM_072174.6"/>
</dbReference>
<dbReference type="SMR" id="P27798"/>
<dbReference type="BioGRID" id="44045">
    <property type="interactions" value="28"/>
</dbReference>
<dbReference type="DIP" id="DIP-25701N"/>
<dbReference type="FunCoup" id="P27798">
    <property type="interactions" value="2658"/>
</dbReference>
<dbReference type="IntAct" id="P27798">
    <property type="interactions" value="4"/>
</dbReference>
<dbReference type="MINT" id="P27798"/>
<dbReference type="STRING" id="6239.Y38A10A.5.2"/>
<dbReference type="PaxDb" id="6239-Y38A10A.5.1"/>
<dbReference type="PeptideAtlas" id="P27798"/>
<dbReference type="EnsemblMetazoa" id="Y38A10A.5.1">
    <property type="protein sequence ID" value="Y38A10A.5.1"/>
    <property type="gene ID" value="WBGene00000802"/>
</dbReference>
<dbReference type="GeneID" id="178997"/>
<dbReference type="KEGG" id="cel:CELE_Y38A10A.5"/>
<dbReference type="UCSC" id="Y38A10A.5.1">
    <property type="organism name" value="c. elegans"/>
</dbReference>
<dbReference type="AGR" id="WB:WBGene00000802"/>
<dbReference type="CTD" id="178997"/>
<dbReference type="WormBase" id="Y38A10A.5">
    <property type="protein sequence ID" value="CE21562"/>
    <property type="gene ID" value="WBGene00000802"/>
    <property type="gene designation" value="crt-1"/>
</dbReference>
<dbReference type="eggNOG" id="KOG0674">
    <property type="taxonomic scope" value="Eukaryota"/>
</dbReference>
<dbReference type="GeneTree" id="ENSGT00950000182915"/>
<dbReference type="HOGENOM" id="CLU_018224_0_2_1"/>
<dbReference type="InParanoid" id="P27798"/>
<dbReference type="OMA" id="SRAAKFP"/>
<dbReference type="OrthoDB" id="1938156at2759"/>
<dbReference type="PhylomeDB" id="P27798"/>
<dbReference type="Reactome" id="R-CEL-901042">
    <property type="pathway name" value="Calnexin/calreticulin cycle"/>
</dbReference>
<dbReference type="PRO" id="PR:P27798"/>
<dbReference type="Proteomes" id="UP000001940">
    <property type="component" value="Chromosome V"/>
</dbReference>
<dbReference type="Bgee" id="WBGene00000802">
    <property type="expression patterns" value="Expressed in embryo and 5 other cell types or tissues"/>
</dbReference>
<dbReference type="GO" id="GO:0005737">
    <property type="term" value="C:cytoplasm"/>
    <property type="evidence" value="ECO:0000314"/>
    <property type="project" value="WormBase"/>
</dbReference>
<dbReference type="GO" id="GO:0005788">
    <property type="term" value="C:endoplasmic reticulum lumen"/>
    <property type="evidence" value="ECO:0007669"/>
    <property type="project" value="UniProtKB-SubCell"/>
</dbReference>
<dbReference type="GO" id="GO:0005789">
    <property type="term" value="C:endoplasmic reticulum membrane"/>
    <property type="evidence" value="ECO:0000318"/>
    <property type="project" value="GO_Central"/>
</dbReference>
<dbReference type="GO" id="GO:0005509">
    <property type="term" value="F:calcium ion binding"/>
    <property type="evidence" value="ECO:0000314"/>
    <property type="project" value="WormBase"/>
</dbReference>
<dbReference type="GO" id="GO:0030246">
    <property type="term" value="F:carbohydrate binding"/>
    <property type="evidence" value="ECO:0007669"/>
    <property type="project" value="UniProtKB-KW"/>
</dbReference>
<dbReference type="GO" id="GO:0051082">
    <property type="term" value="F:unfolded protein binding"/>
    <property type="evidence" value="ECO:0007669"/>
    <property type="project" value="InterPro"/>
</dbReference>
<dbReference type="GO" id="GO:0030421">
    <property type="term" value="P:defecation"/>
    <property type="evidence" value="ECO:0000316"/>
    <property type="project" value="WormBase"/>
</dbReference>
<dbReference type="GO" id="GO:0008340">
    <property type="term" value="P:determination of adult lifespan"/>
    <property type="evidence" value="ECO:0000315"/>
    <property type="project" value="UniProtKB"/>
</dbReference>
<dbReference type="GO" id="GO:0032469">
    <property type="term" value="P:endoplasmic reticulum calcium ion homeostasis"/>
    <property type="evidence" value="ECO:0000315"/>
    <property type="project" value="UniProtKB"/>
</dbReference>
<dbReference type="GO" id="GO:0030968">
    <property type="term" value="P:endoplasmic reticulum unfolded protein response"/>
    <property type="evidence" value="ECO:0000315"/>
    <property type="project" value="WormBase"/>
</dbReference>
<dbReference type="GO" id="GO:0036503">
    <property type="term" value="P:ERAD pathway"/>
    <property type="evidence" value="ECO:0000318"/>
    <property type="project" value="GO_Central"/>
</dbReference>
<dbReference type="GO" id="GO:0031581">
    <property type="term" value="P:hemidesmosome assembly"/>
    <property type="evidence" value="ECO:0000316"/>
    <property type="project" value="WormBase"/>
</dbReference>
<dbReference type="GO" id="GO:0036498">
    <property type="term" value="P:IRE1-mediated unfolded protein response"/>
    <property type="evidence" value="ECO:0000315"/>
    <property type="project" value="WormBase"/>
</dbReference>
<dbReference type="GO" id="GO:0048609">
    <property type="term" value="P:multicellular organismal reproductive process"/>
    <property type="evidence" value="ECO:0000316"/>
    <property type="project" value="WormBase"/>
</dbReference>
<dbReference type="GO" id="GO:0012501">
    <property type="term" value="P:programmed cell death"/>
    <property type="evidence" value="ECO:0000316"/>
    <property type="project" value="WormBase"/>
</dbReference>
<dbReference type="GO" id="GO:0006457">
    <property type="term" value="P:protein folding"/>
    <property type="evidence" value="ECO:0000318"/>
    <property type="project" value="GO_Central"/>
</dbReference>
<dbReference type="GO" id="GO:0010468">
    <property type="term" value="P:regulation of gene expression"/>
    <property type="evidence" value="ECO:0000315"/>
    <property type="project" value="WormBase"/>
</dbReference>
<dbReference type="GO" id="GO:0045471">
    <property type="term" value="P:response to ethanol"/>
    <property type="evidence" value="ECO:0000270"/>
    <property type="project" value="WormBase"/>
</dbReference>
<dbReference type="GO" id="GO:0009408">
    <property type="term" value="P:response to heat"/>
    <property type="evidence" value="ECO:0000315"/>
    <property type="project" value="WormBase"/>
</dbReference>
<dbReference type="FunFam" id="2.10.250.10:FF:000002">
    <property type="entry name" value="Calreticulin"/>
    <property type="match status" value="1"/>
</dbReference>
<dbReference type="FunFam" id="2.60.120.200:FF:000122">
    <property type="entry name" value="Calreticulin 3"/>
    <property type="match status" value="1"/>
</dbReference>
<dbReference type="Gene3D" id="2.60.120.200">
    <property type="match status" value="1"/>
</dbReference>
<dbReference type="Gene3D" id="2.10.250.10">
    <property type="entry name" value="Calreticulin/calnexin, P domain"/>
    <property type="match status" value="1"/>
</dbReference>
<dbReference type="InterPro" id="IPR001580">
    <property type="entry name" value="Calret/calnex"/>
</dbReference>
<dbReference type="InterPro" id="IPR018124">
    <property type="entry name" value="Calret/calnex_CS"/>
</dbReference>
<dbReference type="InterPro" id="IPR009169">
    <property type="entry name" value="Calreticulin"/>
</dbReference>
<dbReference type="InterPro" id="IPR009033">
    <property type="entry name" value="Calreticulin/calnexin_P_dom_sf"/>
</dbReference>
<dbReference type="InterPro" id="IPR013320">
    <property type="entry name" value="ConA-like_dom_sf"/>
</dbReference>
<dbReference type="PANTHER" id="PTHR11073:SF2">
    <property type="entry name" value="CALRETICULIN"/>
    <property type="match status" value="1"/>
</dbReference>
<dbReference type="PANTHER" id="PTHR11073">
    <property type="entry name" value="CALRETICULIN AND CALNEXIN"/>
    <property type="match status" value="1"/>
</dbReference>
<dbReference type="Pfam" id="PF00262">
    <property type="entry name" value="Calreticulin"/>
    <property type="match status" value="2"/>
</dbReference>
<dbReference type="PIRSF" id="PIRSF002356">
    <property type="entry name" value="Calreticulin"/>
    <property type="match status" value="1"/>
</dbReference>
<dbReference type="PRINTS" id="PR00626">
    <property type="entry name" value="CALRETICULIN"/>
</dbReference>
<dbReference type="SUPFAM" id="SSF49899">
    <property type="entry name" value="Concanavalin A-like lectins/glucanases"/>
    <property type="match status" value="1"/>
</dbReference>
<dbReference type="SUPFAM" id="SSF63887">
    <property type="entry name" value="P-domain of calnexin/calreticulin"/>
    <property type="match status" value="1"/>
</dbReference>
<dbReference type="PROSITE" id="PS00803">
    <property type="entry name" value="CALRETICULIN_1"/>
    <property type="match status" value="1"/>
</dbReference>
<dbReference type="PROSITE" id="PS00804">
    <property type="entry name" value="CALRETICULIN_2"/>
    <property type="match status" value="1"/>
</dbReference>
<dbReference type="PROSITE" id="PS00805">
    <property type="entry name" value="CALRETICULIN_REPEAT"/>
    <property type="match status" value="3"/>
</dbReference>
<dbReference type="PROSITE" id="PS00014">
    <property type="entry name" value="ER_TARGET"/>
    <property type="match status" value="1"/>
</dbReference>
<accession>P27798</accession>
<reference key="1">
    <citation type="journal article" date="1992" name="DNA Seq.">
        <title>A C. elegans gene encodes a protein homologous to mammalian calreticulin.</title>
        <authorList>
            <person name="Smith M.J."/>
        </authorList>
    </citation>
    <scope>NUCLEOTIDE SEQUENCE [GENOMIC DNA]</scope>
    <source>
        <strain>Bristol N2</strain>
    </source>
</reference>
<reference key="2">
    <citation type="journal article" date="1998" name="Science">
        <title>Genome sequence of the nematode C. elegans: a platform for investigating biology.</title>
        <authorList>
            <consortium name="The C. elegans sequencing consortium"/>
        </authorList>
    </citation>
    <scope>NUCLEOTIDE SEQUENCE [LARGE SCALE GENOMIC DNA]</scope>
    <source>
        <strain>Bristol N2</strain>
    </source>
</reference>
<reference key="3">
    <citation type="journal article" date="2007" name="J. Biol. Chem.">
        <title>Establishing a blueprint for CED-3-dependent killing through identification of multiple substrates for this protease.</title>
        <authorList>
            <person name="Taylor R.C."/>
            <person name="Brumatti G."/>
            <person name="Ito S."/>
            <person name="Hengartner M.O."/>
            <person name="Derry W.B."/>
            <person name="Martin S.J."/>
        </authorList>
    </citation>
    <scope>PROTEOLYTIC CLEAVAGE</scope>
    <scope>MUTAGENESIS OF ASP-182; ASP-225 AND ASP-253</scope>
</reference>
<reference key="4">
    <citation type="journal article" date="2010" name="Curr. Biol.">
        <title>CRT-1/calreticulin and the E3 ligase EEL-1/HUWE1 control hemidesmosome maturation in C. elegans development.</title>
        <authorList>
            <person name="Zahreddine H."/>
            <person name="Zhang H."/>
            <person name="Diogon M."/>
            <person name="Nagamatsu Y."/>
            <person name="Labouesse M."/>
        </authorList>
    </citation>
    <scope>FUNCTION</scope>
    <scope>DISRUPTION PHENOTYPE</scope>
</reference>
<reference key="5">
    <citation type="journal article" date="2014" name="Int. J. Biochem. Cell Biol.">
        <title>Sumoylation regulates ER stress response by modulating calreticulin gene expression in XBP-1-dependent mode in Caenorhabditis elegans.</title>
        <authorList>
            <person name="Lim Y."/>
            <person name="Lee D."/>
            <person name="Kalichamy K."/>
            <person name="Hong S.E."/>
            <person name="Michalak M."/>
            <person name="Ahnn J."/>
            <person name="Kim D.H."/>
            <person name="Lee S.K."/>
        </authorList>
    </citation>
    <scope>FUNCTION</scope>
    <scope>INDUCTION BY ER STRESS</scope>
</reference>
<reference key="6">
    <citation type="journal article" date="2018" name="PLoS Genet.">
        <title>Mutations in Caenorhabditis elegans neuroligin-like glit-1, the apoptosis pathway and the calcium chaperone crt-1 increase dopaminergic neurodegeneration after 6-OHDA treatment.</title>
        <authorList>
            <person name="Offenburger S.L."/>
            <person name="Jongsma E."/>
            <person name="Gartner A."/>
        </authorList>
    </citation>
    <scope>FUNCTION</scope>
</reference>
<reference key="7">
    <citation type="journal article" date="2020" name="Cell Rep.">
        <title>Atf-6 Regulates Lifespan through ER-Mitochondrial Calcium Homeostasis.</title>
        <authorList>
            <person name="Burkewitz K."/>
            <person name="Feng G."/>
            <person name="Dutta S."/>
            <person name="Kelley C.A."/>
            <person name="Steinbaugh M."/>
            <person name="Cram E.J."/>
            <person name="Mair W.B."/>
        </authorList>
    </citation>
    <scope>FUNCTION</scope>
    <scope>INDUCTION</scope>
    <scope>MUTAGENESIS OF 28-TRP--LEU-395</scope>
</reference>
<name>CALR_CAEEL</name>
<gene>
    <name type="primary">crt-1</name>
    <name type="ORF">Y38A10A.5</name>
</gene>
<feature type="signal peptide" evidence="3">
    <location>
        <begin position="1"/>
        <end position="15"/>
    </location>
</feature>
<feature type="chain" id="PRO_0000004180" description="Calreticulin">
    <location>
        <begin position="16"/>
        <end position="395"/>
    </location>
</feature>
<feature type="repeat" description="1-1">
    <location>
        <begin position="186"/>
        <end position="197"/>
    </location>
</feature>
<feature type="repeat" description="1-2">
    <location>
        <begin position="205"/>
        <end position="216"/>
    </location>
</feature>
<feature type="repeat" description="1-3">
    <location>
        <begin position="222"/>
        <end position="233"/>
    </location>
</feature>
<feature type="repeat" description="1-4">
    <location>
        <begin position="239"/>
        <end position="250"/>
    </location>
</feature>
<feature type="repeat" description="2-1">
    <location>
        <begin position="254"/>
        <end position="264"/>
    </location>
</feature>
<feature type="repeat" description="2-2">
    <location>
        <begin position="268"/>
        <end position="278"/>
    </location>
</feature>
<feature type="repeat" description="2-3">
    <location>
        <begin position="282"/>
        <end position="292"/>
    </location>
</feature>
<feature type="region of interest" description="4 X approximate repeats">
    <location>
        <begin position="186"/>
        <end position="250"/>
    </location>
</feature>
<feature type="region of interest" description="N-domain">
    <location>
        <begin status="unknown"/>
        <end position="192"/>
    </location>
</feature>
<feature type="region of interest" description="P-domain">
    <location>
        <begin position="193"/>
        <end position="301"/>
    </location>
</feature>
<feature type="region of interest" description="Disordered" evidence="5">
    <location>
        <begin position="202"/>
        <end position="255"/>
    </location>
</feature>
<feature type="region of interest" description="3 X approximate repeats">
    <location>
        <begin position="254"/>
        <end position="292"/>
    </location>
</feature>
<feature type="region of interest" description="C-domain">
    <location>
        <begin position="302"/>
        <end position="395"/>
    </location>
</feature>
<feature type="region of interest" description="Disordered" evidence="5">
    <location>
        <begin position="340"/>
        <end position="395"/>
    </location>
</feature>
<feature type="short sequence motif" description="Prevents secretion from ER" evidence="4">
    <location>
        <begin position="392"/>
        <end position="395"/>
    </location>
</feature>
<feature type="compositionally biased region" description="Basic and acidic residues" evidence="5">
    <location>
        <begin position="202"/>
        <end position="212"/>
    </location>
</feature>
<feature type="compositionally biased region" description="Acidic residues" evidence="5">
    <location>
        <begin position="213"/>
        <end position="224"/>
    </location>
</feature>
<feature type="compositionally biased region" description="Basic and acidic residues" evidence="5">
    <location>
        <begin position="225"/>
        <end position="246"/>
    </location>
</feature>
<feature type="compositionally biased region" description="Basic and acidic residues" evidence="5">
    <location>
        <begin position="340"/>
        <end position="380"/>
    </location>
</feature>
<feature type="compositionally biased region" description="Acidic residues" evidence="5">
    <location>
        <begin position="381"/>
        <end position="395"/>
    </location>
</feature>
<feature type="binding site" evidence="2">
    <location>
        <position position="105"/>
    </location>
    <ligand>
        <name>an alpha-D-glucoside</name>
        <dbReference type="ChEBI" id="CHEBI:22390"/>
    </ligand>
</feature>
<feature type="binding site" evidence="2">
    <location>
        <position position="107"/>
    </location>
    <ligand>
        <name>an alpha-D-glucoside</name>
        <dbReference type="ChEBI" id="CHEBI:22390"/>
    </ligand>
</feature>
<feature type="binding site" evidence="2">
    <location>
        <position position="124"/>
    </location>
    <ligand>
        <name>an alpha-D-glucoside</name>
        <dbReference type="ChEBI" id="CHEBI:22390"/>
    </ligand>
</feature>
<feature type="binding site" evidence="2">
    <location>
        <position position="131"/>
    </location>
    <ligand>
        <name>an alpha-D-glucoside</name>
        <dbReference type="ChEBI" id="CHEBI:22390"/>
    </ligand>
</feature>
<feature type="binding site" evidence="2">
    <location>
        <position position="312"/>
    </location>
    <ligand>
        <name>an alpha-D-glucoside</name>
        <dbReference type="ChEBI" id="CHEBI:22390"/>
    </ligand>
</feature>
<feature type="disulfide bond" evidence="1">
    <location>
        <begin position="101"/>
        <end position="133"/>
    </location>
</feature>
<feature type="mutagenesis site" description="In bz29; extended lifespan." evidence="10">
    <location>
        <begin position="28"/>
        <end position="395"/>
    </location>
</feature>
<feature type="mutagenesis site" description="Partial reduction in ced-3-mediated cleavage; when associated with E-225 and E-253." evidence="6">
    <original>D</original>
    <variation>E</variation>
    <location>
        <position position="182"/>
    </location>
</feature>
<feature type="mutagenesis site" description="Partial reduction in ced-3-mediated cleavage; when associated with E-182 and E-253." evidence="6">
    <original>D</original>
    <variation>E</variation>
    <location>
        <position position="225"/>
    </location>
</feature>
<feature type="mutagenesis site" description="Partial reduction in ced-3-mediated cleavage; when associated with E-182 and E-225." evidence="6">
    <original>D</original>
    <variation>E</variation>
    <location>
        <position position="253"/>
    </location>
</feature>
<keyword id="KW-0106">Calcium</keyword>
<keyword id="KW-0143">Chaperone</keyword>
<keyword id="KW-1015">Disulfide bond</keyword>
<keyword id="KW-0256">Endoplasmic reticulum</keyword>
<keyword id="KW-0430">Lectin</keyword>
<keyword id="KW-0479">Metal-binding</keyword>
<keyword id="KW-1185">Reference proteome</keyword>
<keyword id="KW-0677">Repeat</keyword>
<keyword id="KW-0732">Signal</keyword>
<keyword id="KW-0862">Zinc</keyword>
<sequence length="395" mass="45616">MKSLCLLAIVAVVSAEVYFKEEFNDASWEKRWVQSKHKDDFGAFKLSAGKFFDVESRDQGIQTSQDAKFYSRAAKFDKDFSNKGKTLVIQYTVKHEQGIDCGGGYVKVMRADADLGDFHGETPYNVMFGPDICGPTRRVHVILNYKGENKLIKKEITCKSDELTHLYTLILNSDNTYEVKIDGESAQTGSLEEDWDLLPAKKIKDPDAKKPEDWDEREYIDDAEDAKPEDWEKPEHIPDPDAKKPEDWDDEMDGEWEPPMIDNPEYKGEWKPKQIKNPAYKGKWIHPEIENPEYTPDDELYSYESWGAIGFDLWQVKSGTIFDNIIITDSVEEAEAHAAETFDKLKTVEKEKKEKADEETRKAEEEARKKAEEEKEAKKDDDEEEKEEEEGHDEL</sequence>